<accession>Q82GB8</accession>
<gene>
    <name evidence="1" type="primary">gpmA</name>
    <name type="synonym">gpm1</name>
    <name type="ordered locus">SAV_3979</name>
</gene>
<reference key="1">
    <citation type="journal article" date="2001" name="Proc. Natl. Acad. Sci. U.S.A.">
        <title>Genome sequence of an industrial microorganism Streptomyces avermitilis: deducing the ability of producing secondary metabolites.</title>
        <authorList>
            <person name="Omura S."/>
            <person name="Ikeda H."/>
            <person name="Ishikawa J."/>
            <person name="Hanamoto A."/>
            <person name="Takahashi C."/>
            <person name="Shinose M."/>
            <person name="Takahashi Y."/>
            <person name="Horikawa H."/>
            <person name="Nakazawa H."/>
            <person name="Osonoe T."/>
            <person name="Kikuchi H."/>
            <person name="Shiba T."/>
            <person name="Sakaki Y."/>
            <person name="Hattori M."/>
        </authorList>
    </citation>
    <scope>NUCLEOTIDE SEQUENCE [LARGE SCALE GENOMIC DNA]</scope>
    <source>
        <strain>ATCC 31267 / DSM 46492 / JCM 5070 / NBRC 14893 / NCIMB 12804 / NRRL 8165 / MA-4680</strain>
    </source>
</reference>
<reference key="2">
    <citation type="journal article" date="2003" name="Nat. Biotechnol.">
        <title>Complete genome sequence and comparative analysis of the industrial microorganism Streptomyces avermitilis.</title>
        <authorList>
            <person name="Ikeda H."/>
            <person name="Ishikawa J."/>
            <person name="Hanamoto A."/>
            <person name="Shinose M."/>
            <person name="Kikuchi H."/>
            <person name="Shiba T."/>
            <person name="Sakaki Y."/>
            <person name="Hattori M."/>
            <person name="Omura S."/>
        </authorList>
    </citation>
    <scope>NUCLEOTIDE SEQUENCE [LARGE SCALE GENOMIC DNA]</scope>
    <source>
        <strain>ATCC 31267 / DSM 46492 / JCM 5070 / NBRC 14893 / NCIMB 12804 / NRRL 8165 / MA-4680</strain>
    </source>
</reference>
<sequence>MADAPYKLILLRHGESEWNAKNLFTGWVDVNLNEKGEKEAVRGGELLKDAGLLPDVVHTSLQKRAIRTAQLALESADRHWIPVHRSWRLNERHYGALQGKDKAQTLAEFGEEQFMLWRRSYDTPPPPLADGSEFSQSDDPRYASIPPELRPKTECLKDVVNRMLPYWYDGIVPDLLTGRTVLVAAHGNSLRALVKHLDGISDEDIAGLNIPTGIPLSYELDTDFKPLNPGGTYLDPDAAAAAIEAVKNQGKKK</sequence>
<evidence type="ECO:0000255" key="1">
    <source>
        <dbReference type="HAMAP-Rule" id="MF_01039"/>
    </source>
</evidence>
<evidence type="ECO:0000256" key="2">
    <source>
        <dbReference type="SAM" id="MobiDB-lite"/>
    </source>
</evidence>
<protein>
    <recommendedName>
        <fullName evidence="1">2,3-bisphosphoglycerate-dependent phosphoglycerate mutase</fullName>
        <shortName evidence="1">BPG-dependent PGAM</shortName>
        <shortName evidence="1">PGAM</shortName>
        <shortName evidence="1">Phosphoglyceromutase</shortName>
        <shortName evidence="1">dPGM</shortName>
        <ecNumber evidence="1">5.4.2.11</ecNumber>
    </recommendedName>
</protein>
<feature type="chain" id="PRO_0000179922" description="2,3-bisphosphoglycerate-dependent phosphoglycerate mutase">
    <location>
        <begin position="1"/>
        <end position="253"/>
    </location>
</feature>
<feature type="region of interest" description="Disordered" evidence="2">
    <location>
        <begin position="126"/>
        <end position="148"/>
    </location>
</feature>
<feature type="active site" description="Tele-phosphohistidine intermediate" evidence="1">
    <location>
        <position position="13"/>
    </location>
</feature>
<feature type="active site" description="Proton donor/acceptor" evidence="1">
    <location>
        <position position="91"/>
    </location>
</feature>
<feature type="binding site" evidence="1">
    <location>
        <begin position="12"/>
        <end position="19"/>
    </location>
    <ligand>
        <name>substrate</name>
    </ligand>
</feature>
<feature type="binding site" evidence="1">
    <location>
        <begin position="25"/>
        <end position="26"/>
    </location>
    <ligand>
        <name>substrate</name>
    </ligand>
</feature>
<feature type="binding site" evidence="1">
    <location>
        <position position="64"/>
    </location>
    <ligand>
        <name>substrate</name>
    </ligand>
</feature>
<feature type="binding site" evidence="1">
    <location>
        <begin position="91"/>
        <end position="94"/>
    </location>
    <ligand>
        <name>substrate</name>
    </ligand>
</feature>
<feature type="binding site" evidence="1">
    <location>
        <position position="102"/>
    </location>
    <ligand>
        <name>substrate</name>
    </ligand>
</feature>
<feature type="binding site" evidence="1">
    <location>
        <begin position="118"/>
        <end position="119"/>
    </location>
    <ligand>
        <name>substrate</name>
    </ligand>
</feature>
<feature type="binding site" evidence="1">
    <location>
        <begin position="187"/>
        <end position="188"/>
    </location>
    <ligand>
        <name>substrate</name>
    </ligand>
</feature>
<feature type="site" description="Transition state stabilizer" evidence="1">
    <location>
        <position position="186"/>
    </location>
</feature>
<keyword id="KW-0312">Gluconeogenesis</keyword>
<keyword id="KW-0324">Glycolysis</keyword>
<keyword id="KW-0413">Isomerase</keyword>
<keyword id="KW-1185">Reference proteome</keyword>
<dbReference type="EC" id="5.4.2.11" evidence="1"/>
<dbReference type="EMBL" id="BA000030">
    <property type="protein sequence ID" value="BAC71691.1"/>
    <property type="molecule type" value="Genomic_DNA"/>
</dbReference>
<dbReference type="RefSeq" id="WP_010985408.1">
    <property type="nucleotide sequence ID" value="NZ_JZJK01000060.1"/>
</dbReference>
<dbReference type="SMR" id="Q82GB8"/>
<dbReference type="GeneID" id="41541047"/>
<dbReference type="KEGG" id="sma:SAVERM_3979"/>
<dbReference type="eggNOG" id="COG0588">
    <property type="taxonomic scope" value="Bacteria"/>
</dbReference>
<dbReference type="HOGENOM" id="CLU_033323_1_1_11"/>
<dbReference type="OrthoDB" id="9781415at2"/>
<dbReference type="UniPathway" id="UPA00109">
    <property type="reaction ID" value="UER00186"/>
</dbReference>
<dbReference type="Proteomes" id="UP000000428">
    <property type="component" value="Chromosome"/>
</dbReference>
<dbReference type="GO" id="GO:0004619">
    <property type="term" value="F:phosphoglycerate mutase activity"/>
    <property type="evidence" value="ECO:0007669"/>
    <property type="project" value="UniProtKB-EC"/>
</dbReference>
<dbReference type="GO" id="GO:0006094">
    <property type="term" value="P:gluconeogenesis"/>
    <property type="evidence" value="ECO:0007669"/>
    <property type="project" value="UniProtKB-UniRule"/>
</dbReference>
<dbReference type="GO" id="GO:0006096">
    <property type="term" value="P:glycolytic process"/>
    <property type="evidence" value="ECO:0007669"/>
    <property type="project" value="UniProtKB-UniRule"/>
</dbReference>
<dbReference type="CDD" id="cd07067">
    <property type="entry name" value="HP_PGM_like"/>
    <property type="match status" value="1"/>
</dbReference>
<dbReference type="FunFam" id="3.40.50.1240:FF:000012">
    <property type="entry name" value="Phosphoglycerate mutase 1"/>
    <property type="match status" value="1"/>
</dbReference>
<dbReference type="Gene3D" id="3.40.50.1240">
    <property type="entry name" value="Phosphoglycerate mutase-like"/>
    <property type="match status" value="1"/>
</dbReference>
<dbReference type="HAMAP" id="MF_01039">
    <property type="entry name" value="PGAM_GpmA"/>
    <property type="match status" value="1"/>
</dbReference>
<dbReference type="InterPro" id="IPR013078">
    <property type="entry name" value="His_Pase_superF_clade-1"/>
</dbReference>
<dbReference type="InterPro" id="IPR029033">
    <property type="entry name" value="His_PPase_superfam"/>
</dbReference>
<dbReference type="InterPro" id="IPR001345">
    <property type="entry name" value="PG/BPGM_mutase_AS"/>
</dbReference>
<dbReference type="InterPro" id="IPR005952">
    <property type="entry name" value="Phosphogly_mut1"/>
</dbReference>
<dbReference type="NCBIfam" id="TIGR01258">
    <property type="entry name" value="pgm_1"/>
    <property type="match status" value="1"/>
</dbReference>
<dbReference type="NCBIfam" id="NF010713">
    <property type="entry name" value="PRK14115.1"/>
    <property type="match status" value="1"/>
</dbReference>
<dbReference type="NCBIfam" id="NF010718">
    <property type="entry name" value="PRK14120.1"/>
    <property type="match status" value="1"/>
</dbReference>
<dbReference type="PANTHER" id="PTHR11931">
    <property type="entry name" value="PHOSPHOGLYCERATE MUTASE"/>
    <property type="match status" value="1"/>
</dbReference>
<dbReference type="Pfam" id="PF00300">
    <property type="entry name" value="His_Phos_1"/>
    <property type="match status" value="1"/>
</dbReference>
<dbReference type="PIRSF" id="PIRSF000709">
    <property type="entry name" value="6PFK_2-Ptase"/>
    <property type="match status" value="1"/>
</dbReference>
<dbReference type="SMART" id="SM00855">
    <property type="entry name" value="PGAM"/>
    <property type="match status" value="1"/>
</dbReference>
<dbReference type="SUPFAM" id="SSF53254">
    <property type="entry name" value="Phosphoglycerate mutase-like"/>
    <property type="match status" value="1"/>
</dbReference>
<dbReference type="PROSITE" id="PS00175">
    <property type="entry name" value="PG_MUTASE"/>
    <property type="match status" value="1"/>
</dbReference>
<organism>
    <name type="scientific">Streptomyces avermitilis (strain ATCC 31267 / DSM 46492 / JCM 5070 / NBRC 14893 / NCIMB 12804 / NRRL 8165 / MA-4680)</name>
    <dbReference type="NCBI Taxonomy" id="227882"/>
    <lineage>
        <taxon>Bacteria</taxon>
        <taxon>Bacillati</taxon>
        <taxon>Actinomycetota</taxon>
        <taxon>Actinomycetes</taxon>
        <taxon>Kitasatosporales</taxon>
        <taxon>Streptomycetaceae</taxon>
        <taxon>Streptomyces</taxon>
    </lineage>
</organism>
<name>GPMA_STRAW</name>
<comment type="function">
    <text evidence="1">Catalyzes the interconversion of 2-phosphoglycerate and 3-phosphoglycerate.</text>
</comment>
<comment type="catalytic activity">
    <reaction evidence="1">
        <text>(2R)-2-phosphoglycerate = (2R)-3-phosphoglycerate</text>
        <dbReference type="Rhea" id="RHEA:15901"/>
        <dbReference type="ChEBI" id="CHEBI:58272"/>
        <dbReference type="ChEBI" id="CHEBI:58289"/>
        <dbReference type="EC" id="5.4.2.11"/>
    </reaction>
</comment>
<comment type="pathway">
    <text evidence="1">Carbohydrate degradation; glycolysis; pyruvate from D-glyceraldehyde 3-phosphate: step 3/5.</text>
</comment>
<comment type="similarity">
    <text evidence="1">Belongs to the phosphoglycerate mutase family. BPG-dependent PGAM subfamily.</text>
</comment>
<proteinExistence type="inferred from homology"/>